<reference key="1">
    <citation type="journal article" date="2012" name="Biochem. Pharmacol.">
        <title>Cloning and activity of a novel alpha-latrotoxin from red-back spider venom.</title>
        <authorList>
            <person name="Graudins A."/>
            <person name="Little M.J."/>
            <person name="Pineda S.S."/>
            <person name="Hains P.G."/>
            <person name="King G.F."/>
            <person name="Broady K.W."/>
            <person name="Nicholson G.M."/>
        </authorList>
    </citation>
    <scope>NUCLEOTIDE SEQUENCE [GENOMIC DNA]</scope>
    <scope>PARTIAL PROTEIN SEQUENCE</scope>
    <scope>FUNCTION</scope>
    <scope>IDENTIFICATION BY MASS SPECTROMETRY</scope>
    <scope>SUBCELLULAR LOCATION</scope>
    <source>
        <tissue>Venom</tissue>
        <tissue>Venom gland</tissue>
    </source>
</reference>
<keyword id="KW-0040">ANK repeat</keyword>
<keyword id="KW-0165">Cleavage on pair of basic residues</keyword>
<keyword id="KW-0903">Direct protein sequencing</keyword>
<keyword id="KW-1015">Disulfide bond</keyword>
<keyword id="KW-0268">Exocytosis</keyword>
<keyword id="KW-0472">Membrane</keyword>
<keyword id="KW-0528">Neurotoxin</keyword>
<keyword id="KW-0638">Presynaptic neurotoxin</keyword>
<keyword id="KW-0677">Repeat</keyword>
<keyword id="KW-0964">Secreted</keyword>
<keyword id="KW-0732">Signal</keyword>
<keyword id="KW-1052">Target cell membrane</keyword>
<keyword id="KW-1053">Target membrane</keyword>
<keyword id="KW-0800">Toxin</keyword>
<keyword id="KW-0812">Transmembrane</keyword>
<accession>G0LXV8</accession>
<sequence length="1351" mass="151407">SLVRMRREGEEDLTLEEKAELCSELELQQKYVDIGSNIIGDLSSLPIVGKIVGTIAAAAMAVTHVASGRLDIEQTLGGCSDVPFDQIKEILEERFNEIDRKLESHSAALEEITKLVEKSISAVEKTRKQMNKRFDEVMRSIQDAKVSPLVSKINNFARYFDTEKERIRGLKLSDYILKLEEPNGILLHFKESRTPRDDSLQAPLFSIIQERYAVPKSIDDELAFKVLYALLYGTQTYVSVMFFLLEQYSFLANHYYEKGDLEKYDEYFNSLNNVFLDFKSSLVGTGTSNNEGLLDRVLQVLVTVKNSEFLGLEKNGVNEMLNEKINLFNKIKVEIEGKQRMTLSETPENFAQISFDKDITTPIGDWRDGREVRYAVQYASETLFSKISHWSDPVGVREKACPTLRMPVDQTRRNILVFRKFDSSKPQLVGEITPYQSNFIDIDRDLYNTANNPDSAVGFKEFTKLNYDGANIRATFEQGRTVFHAAAKSGNSRIMIGLTFLVKSNELNQPDKKGYTPIHVAADSGNAGIVNLLIQRGVSINSKTYNFLQTPLHLAAQRGFVTTFQRLMESPEININERDKDGFTPLHYAVRGGERILEAFINQIRIDLNAKSNKGLTPFHLAIIKDDWPVASTLLGSKKVDVNAVDENNMTALHYAAILGYLETTKQLINLKEINADVVSSPGLLSALHYAILYKHDDVASFLLRSSNVNVNLKALGGITPLHLAVIQGRTQILSLMFDIGVNIEQQTDEKYTPLHLAAMSKYPELIQILLDQGSNFEAKTNSGATPLHLATFKGKSKAALILLNNEVNWRDTDENGQMPIHGAAMNGLLDVAQAIISIDATVLDIKDKNSDTPLNLAAQKSHIDVIKYFIDQGADINTRNKTGHAPLLAFSKKGNLDMVKYLFDKNANVYIADNDGINFFYYAVRNGHLNIVKYAMSEKDKFEWSNIDNNRRDECPKEECAISHFAVCDAVQFDKIEIVKYFVTTLGNFAICGPLHQAARYGHLDIEKYLVEEEDLNVDGSKPDTPLCYASENGHLAVVQYLVSNGAKVNHDCGNGMTAIDKAITKNHLQVVQFLAANGVDFRRKNKLGATPFLTAVSENAFDIAEYLIRENRQDIDINEQNVDKETALHLAVYYKNLQMIKLLVKYGIDMTIRNAYDKTALDIATDLKNSNIVEYLKTKSGKFRREYKSSYGEHSLLQTNKISSFIDGKNIEHDHPQFINADNESSQLFSDTASNIDVIGPLLLIDVLIRYFSKQGYISKESDSASDGITQAAALSITEKFEDVLNSLHNESAKEQVDLAEVHGKVYAALKSGRNSQIHPILCSSLKSISTLKPEDMEKLGSVIMNSHS</sequence>
<name>LATA_LATHA</name>
<proteinExistence type="evidence at protein level"/>
<protein>
    <recommendedName>
        <fullName evidence="8">Alpha-latrotoxin-Lh1a</fullName>
        <shortName evidence="8">Alpha-LTX-Lh1a</shortName>
    </recommendedName>
    <alternativeName>
        <fullName evidence="7">Alpha-latrotoxin</fullName>
        <shortName evidence="7">Alpha-LTX</shortName>
    </alternativeName>
</protein>
<dbReference type="EMBL" id="FR851877">
    <property type="protein sequence ID" value="CCA64564.1"/>
    <property type="molecule type" value="Genomic_DNA"/>
</dbReference>
<dbReference type="SMR" id="G0LXV8"/>
<dbReference type="GO" id="GO:0005576">
    <property type="term" value="C:extracellular region"/>
    <property type="evidence" value="ECO:0007669"/>
    <property type="project" value="UniProtKB-SubCell"/>
</dbReference>
<dbReference type="GO" id="GO:0044231">
    <property type="term" value="C:host cell presynaptic membrane"/>
    <property type="evidence" value="ECO:0007669"/>
    <property type="project" value="UniProtKB-KW"/>
</dbReference>
<dbReference type="GO" id="GO:0016020">
    <property type="term" value="C:membrane"/>
    <property type="evidence" value="ECO:0007669"/>
    <property type="project" value="UniProtKB-KW"/>
</dbReference>
<dbReference type="GO" id="GO:0044218">
    <property type="term" value="C:other organism cell membrane"/>
    <property type="evidence" value="ECO:0007669"/>
    <property type="project" value="UniProtKB-KW"/>
</dbReference>
<dbReference type="GO" id="GO:0090729">
    <property type="term" value="F:toxin activity"/>
    <property type="evidence" value="ECO:0007669"/>
    <property type="project" value="UniProtKB-KW"/>
</dbReference>
<dbReference type="GO" id="GO:0006887">
    <property type="term" value="P:exocytosis"/>
    <property type="evidence" value="ECO:0007669"/>
    <property type="project" value="UniProtKB-KW"/>
</dbReference>
<dbReference type="Gene3D" id="1.25.40.20">
    <property type="entry name" value="Ankyrin repeat-containing domain"/>
    <property type="match status" value="4"/>
</dbReference>
<dbReference type="InterPro" id="IPR002110">
    <property type="entry name" value="Ankyrin_rpt"/>
</dbReference>
<dbReference type="InterPro" id="IPR036770">
    <property type="entry name" value="Ankyrin_rpt-contain_sf"/>
</dbReference>
<dbReference type="PANTHER" id="PTHR24198">
    <property type="entry name" value="ANKYRIN REPEAT AND PROTEIN KINASE DOMAIN-CONTAINING PROTEIN"/>
    <property type="match status" value="1"/>
</dbReference>
<dbReference type="PANTHER" id="PTHR24198:SF165">
    <property type="entry name" value="ANKYRIN REPEAT-CONTAINING PROTEIN-RELATED"/>
    <property type="match status" value="1"/>
</dbReference>
<dbReference type="Pfam" id="PF12796">
    <property type="entry name" value="Ank_2"/>
    <property type="match status" value="6"/>
</dbReference>
<dbReference type="Pfam" id="PF13637">
    <property type="entry name" value="Ank_4"/>
    <property type="match status" value="1"/>
</dbReference>
<dbReference type="PRINTS" id="PR01415">
    <property type="entry name" value="ANKYRIN"/>
</dbReference>
<dbReference type="SMART" id="SM00248">
    <property type="entry name" value="ANK"/>
    <property type="match status" value="20"/>
</dbReference>
<dbReference type="SUPFAM" id="SSF48403">
    <property type="entry name" value="Ankyrin repeat"/>
    <property type="match status" value="3"/>
</dbReference>
<dbReference type="PROSITE" id="PS50297">
    <property type="entry name" value="ANK_REP_REGION"/>
    <property type="match status" value="1"/>
</dbReference>
<dbReference type="PROSITE" id="PS50088">
    <property type="entry name" value="ANK_REPEAT"/>
    <property type="match status" value="10"/>
</dbReference>
<feature type="signal peptide" evidence="5">
    <location>
        <begin position="1" status="less than"/>
        <end position="7"/>
    </location>
</feature>
<feature type="chain" id="PRO_5000783570" description="Alpha-latrotoxin-Lh1a">
    <location>
        <begin position="8"/>
        <end position="1187"/>
    </location>
</feature>
<feature type="propeptide" id="PRO_0000415931" evidence="1">
    <location>
        <begin position="1188"/>
        <end position="1351" status="greater than"/>
    </location>
</feature>
<feature type="repeat" description="ANK 1" evidence="5">
    <location>
        <begin position="446"/>
        <end position="477"/>
    </location>
</feature>
<feature type="repeat" description="ANK 2" evidence="5">
    <location>
        <begin position="478"/>
        <end position="509"/>
    </location>
</feature>
<feature type="repeat" description="ANK 3" evidence="5">
    <location>
        <begin position="513"/>
        <end position="542"/>
    </location>
</feature>
<feature type="repeat" description="ANK 4" evidence="5">
    <location>
        <begin position="547"/>
        <end position="577"/>
    </location>
</feature>
<feature type="repeat" description="ANK 5" evidence="5">
    <location>
        <begin position="581"/>
        <end position="610"/>
    </location>
</feature>
<feature type="repeat" description="ANK 6" evidence="5">
    <location>
        <begin position="614"/>
        <end position="644"/>
    </location>
</feature>
<feature type="repeat" description="ANK 7" evidence="5">
    <location>
        <begin position="648"/>
        <end position="678"/>
    </location>
</feature>
<feature type="repeat" description="ANK 8" evidence="5">
    <location>
        <begin position="683"/>
        <end position="711"/>
    </location>
</feature>
<feature type="repeat" description="ANK 9" evidence="5">
    <location>
        <begin position="717"/>
        <end position="746"/>
    </location>
</feature>
<feature type="repeat" description="ANK 10" evidence="5">
    <location>
        <begin position="750"/>
        <end position="779"/>
    </location>
</feature>
<feature type="repeat" description="ANK 11" evidence="5">
    <location>
        <begin position="783"/>
        <end position="812"/>
    </location>
</feature>
<feature type="repeat" description="ANK 12" evidence="5">
    <location>
        <begin position="816"/>
        <end position="846"/>
    </location>
</feature>
<feature type="repeat" description="ANK 13" evidence="5">
    <location>
        <begin position="850"/>
        <end position="879"/>
    </location>
</feature>
<feature type="repeat" description="ANK 14" evidence="5">
    <location>
        <begin position="883"/>
        <end position="912"/>
    </location>
</feature>
<feature type="repeat" description="ANK 15" evidence="5">
    <location>
        <begin position="916"/>
        <end position="945"/>
    </location>
</feature>
<feature type="repeat" description="ANK 16" evidence="5">
    <location>
        <begin position="959"/>
        <end position="991"/>
    </location>
</feature>
<feature type="repeat" description="ANK 17" evidence="5">
    <location>
        <begin position="992"/>
        <end position="1019"/>
    </location>
</feature>
<feature type="repeat" description="ANK 18" evidence="5">
    <location>
        <begin position="1023"/>
        <end position="1052"/>
    </location>
</feature>
<feature type="repeat" description="ANK 19" evidence="5">
    <location>
        <begin position="1056"/>
        <end position="1085"/>
    </location>
</feature>
<feature type="repeat" description="ANK 20" evidence="5">
    <location>
        <begin position="1089"/>
        <end position="1119"/>
    </location>
</feature>
<feature type="repeat" description="ANK 21" evidence="5">
    <location>
        <begin position="1125"/>
        <end position="1154"/>
    </location>
</feature>
<feature type="repeat" description="ANK 22" evidence="5">
    <location>
        <begin position="1158"/>
        <end position="1187"/>
    </location>
</feature>
<feature type="region of interest" description="Furin-like endopeptidase recognition region">
    <location>
        <begin position="4"/>
        <end position="7"/>
    </location>
</feature>
<feature type="region of interest" description="Helix H8 is the probable transmembrane region of the tetrameric pore inserted in the target cell membrane" evidence="4">
    <location>
        <begin position="226"/>
        <end position="245"/>
    </location>
</feature>
<feature type="region of interest" description="Furin-like endopeptidase recognition region">
    <location>
        <begin position="1184"/>
        <end position="1187"/>
    </location>
</feature>
<feature type="disulfide bond" evidence="8">
    <location>
        <begin position="401"/>
        <end position="1054"/>
    </location>
</feature>
<feature type="unsure residue" description="Assigned by comparison with orthologs">
    <location>
        <position position="1202"/>
    </location>
</feature>
<feature type="unsure residue" description="Assigned by comparison with orthologs">
    <location>
        <position position="1215"/>
    </location>
</feature>
<feature type="non-terminal residue">
    <location>
        <position position="1"/>
    </location>
</feature>
<feature type="non-terminal residue">
    <location>
        <position position="1351"/>
    </location>
</feature>
<evidence type="ECO:0000250" key="1"/>
<evidence type="ECO:0000250" key="2">
    <source>
        <dbReference type="UniProtKB" id="P0DJE4"/>
    </source>
</evidence>
<evidence type="ECO:0000250" key="3">
    <source>
        <dbReference type="UniProtKB" id="P23631"/>
    </source>
</evidence>
<evidence type="ECO:0000250" key="4">
    <source>
        <dbReference type="UniProtKB" id="Q9XZC0"/>
    </source>
</evidence>
<evidence type="ECO:0000255" key="5"/>
<evidence type="ECO:0000269" key="6">
    <source>
    </source>
</evidence>
<evidence type="ECO:0000303" key="7">
    <source>
    </source>
</evidence>
<evidence type="ECO:0000305" key="8"/>
<organism>
    <name type="scientific">Latrodectus hasselti</name>
    <name type="common">Redback spider</name>
    <dbReference type="NCBI Taxonomy" id="256736"/>
    <lineage>
        <taxon>Eukaryota</taxon>
        <taxon>Metazoa</taxon>
        <taxon>Ecdysozoa</taxon>
        <taxon>Arthropoda</taxon>
        <taxon>Chelicerata</taxon>
        <taxon>Arachnida</taxon>
        <taxon>Araneae</taxon>
        <taxon>Araneomorphae</taxon>
        <taxon>Entelegynae</taxon>
        <taxon>Araneoidea</taxon>
        <taxon>Theridiidae</taxon>
        <taxon>Latrodectus</taxon>
    </lineage>
</organism>
<comment type="function">
    <text evidence="3 6">Presynaptic neurotoxin that causes massive release of neurotransmitters from vertebrate (but not invertebrate) nerve terminals and endocrine cells via a complex mechanism involving activation of receptor(s) and toxin insertion into the plasma membrane with subsequent pore formation. Binds to neurexin-1-alpha (NRXN1) in a calcium dependent manner, adhesion G protein-coupled receptor L1 (ADGRL1, also termed latrophilin-1 and calcium-independent receptor of latrotoxin (CIRL)), and receptor-type tyrosine-protein phosphatase S (PTPRS), also termed PTP sigma. NRXN1 and PTPRS are suggested to provide a platform for binding and subsequent pore formation events. In contrast, binding to ADGRL1 does not involve oligomerization and channel formation, but direct downstream stimulation of the synaptic fusion machinery (By similarity). Induces rapid muscle contracture and loss of twitch tension when added to the isolated and indirectly stimulated chick biventer cervicis nerve-muscle preparation (PubMed:22001442).</text>
</comment>
<comment type="subunit">
    <text evidence="3">Homotetramer in membranes.</text>
</comment>
<comment type="subcellular location">
    <subcellularLocation>
        <location evidence="6">Secreted</location>
    </subcellularLocation>
    <subcellularLocation>
        <location evidence="3">Target cell membrane</location>
    </subcellularLocation>
    <text evidence="3">Forms a membrane channel in the prey.</text>
</comment>
<comment type="tissue specificity">
    <text evidence="2">Expressed in venom gland, cephalothorax, and abdomen tissues from both males and females.</text>
</comment>
<comment type="developmental stage">
    <text evidence="2">Expressed in all life stages examined, including adults, spiderlings and eggs.</text>
</comment>
<comment type="domain">
    <text evidence="4">The H8 helix is predicted to insert into membranes and form pores by assembling into tetramers. The helix is contained within a helical bundle domain that undergoes significant conformational changes during pore formation to allow exposure of the H8 transmembrane helix and transition of the toxin from a soluble monomer to a transmembrane tetramer.</text>
</comment>
<comment type="PTM">
    <text>Processed by furin-like proteases at both the N- and C-termini.</text>
</comment>
<comment type="toxic dose">
    <text>LD(50)is 20 ug/kg by subcutaneous injection into mice.</text>
</comment>
<comment type="miscellaneous">
    <text>Is the main neurotoxin responsible for the human envenomation syndrome known as latrodectism that results from bites by Latrodectus species.</text>
</comment>
<comment type="similarity">
    <text evidence="8">Belongs to the cationic peptide 01 (latrotoxin) family. 03 (alpha-latrotoxin) subfamily.</text>
</comment>